<dbReference type="EMBL" id="D13801">
    <property type="protein sequence ID" value="BAA02959.1"/>
    <property type="molecule type" value="mRNA"/>
</dbReference>
<dbReference type="EMBL" id="L13763">
    <property type="protein sequence ID" value="AAA53044.1"/>
    <property type="molecule type" value="mRNA"/>
</dbReference>
<dbReference type="EMBL" id="AK006732">
    <property type="protein sequence ID" value="BAB24718.1"/>
    <property type="molecule type" value="mRNA"/>
</dbReference>
<dbReference type="EMBL" id="BC059830">
    <property type="protein sequence ID" value="AAH59830.1"/>
    <property type="molecule type" value="mRNA"/>
</dbReference>
<dbReference type="EMBL" id="BC085139">
    <property type="protein sequence ID" value="AAH85139.1"/>
    <property type="molecule type" value="mRNA"/>
</dbReference>
<dbReference type="PIR" id="B46078">
    <property type="entry name" value="B46078"/>
</dbReference>
<dbReference type="PIR" id="I56543">
    <property type="entry name" value="I56543"/>
</dbReference>
<dbReference type="RefSeq" id="NP_001391224.1">
    <molecule id="Q07916-1"/>
    <property type="nucleotide sequence ID" value="NM_001404295.1"/>
</dbReference>
<dbReference type="RefSeq" id="NP_001391225.1">
    <molecule id="Q07916-1"/>
    <property type="nucleotide sequence ID" value="NM_001404296.1"/>
</dbReference>
<dbReference type="RefSeq" id="NP_001391226.1">
    <molecule id="Q07916-1"/>
    <property type="nucleotide sequence ID" value="NM_001404297.1"/>
</dbReference>
<dbReference type="RefSeq" id="NP_034257.1">
    <property type="nucleotide sequence ID" value="NM_010127.3"/>
</dbReference>
<dbReference type="RefSeq" id="XP_011243814.1">
    <property type="nucleotide sequence ID" value="XM_011245512.2"/>
</dbReference>
<dbReference type="RefSeq" id="XP_011243815.1">
    <property type="nucleotide sequence ID" value="XM_011245513.2"/>
</dbReference>
<dbReference type="SMR" id="Q07916"/>
<dbReference type="BioGRID" id="202314">
    <property type="interactions" value="4"/>
</dbReference>
<dbReference type="FunCoup" id="Q07916">
    <property type="interactions" value="727"/>
</dbReference>
<dbReference type="IntAct" id="Q5U4D4">
    <property type="interactions" value="4"/>
</dbReference>
<dbReference type="STRING" id="10090.ENSMUSP00000073504"/>
<dbReference type="GlyGen" id="Q07916">
    <property type="glycosylation" value="4 sites"/>
</dbReference>
<dbReference type="iPTMnet" id="Q07916"/>
<dbReference type="PhosphoSitePlus" id="Q07916"/>
<dbReference type="PaxDb" id="10090-ENSMUSP00000073504"/>
<dbReference type="ProteomicsDB" id="289713">
    <molecule id="Q07916-1"/>
</dbReference>
<dbReference type="ProteomicsDB" id="289714">
    <molecule id="Q07916-2"/>
</dbReference>
<dbReference type="ProteomicsDB" id="289715">
    <molecule id="Q07916-3"/>
</dbReference>
<dbReference type="Antibodypedia" id="14350">
    <property type="antibodies" value="245 antibodies from 27 providers"/>
</dbReference>
<dbReference type="DNASU" id="19009"/>
<dbReference type="Ensembl" id="ENSMUST00000176271.9">
    <molecule id="Q07916-1"/>
    <property type="protein sequence ID" value="ENSMUSP00000145707.2"/>
    <property type="gene ID" value="ENSMUSG00000009739.19"/>
</dbReference>
<dbReference type="GeneID" id="19009"/>
<dbReference type="KEGG" id="mmu:19009"/>
<dbReference type="UCSC" id="uc007xro.1">
    <molecule id="Q07916-3"/>
    <property type="organism name" value="mouse"/>
</dbReference>
<dbReference type="UCSC" id="uc007xrp.1">
    <molecule id="Q07916-1"/>
    <property type="organism name" value="mouse"/>
</dbReference>
<dbReference type="AGR" id="MGI:102935"/>
<dbReference type="CTD" id="5463"/>
<dbReference type="MGI" id="MGI:102935">
    <property type="gene designation" value="Pou6f1"/>
</dbReference>
<dbReference type="VEuPathDB" id="HostDB:ENSMUSG00000009739"/>
<dbReference type="eggNOG" id="KOG3802">
    <property type="taxonomic scope" value="Eukaryota"/>
</dbReference>
<dbReference type="GeneTree" id="ENSGT00940000160106"/>
<dbReference type="HOGENOM" id="CLU_013065_6_0_1"/>
<dbReference type="InParanoid" id="Q07916"/>
<dbReference type="OMA" id="SEMQPIQ"/>
<dbReference type="OrthoDB" id="10066259at2759"/>
<dbReference type="PhylomeDB" id="Q07916"/>
<dbReference type="TreeFam" id="TF350705"/>
<dbReference type="BioGRID-ORCS" id="19009">
    <property type="hits" value="0 hits in 80 CRISPR screens"/>
</dbReference>
<dbReference type="ChiTaRS" id="Pou6f1">
    <property type="organism name" value="mouse"/>
</dbReference>
<dbReference type="PRO" id="PR:Q07916"/>
<dbReference type="Proteomes" id="UP000000589">
    <property type="component" value="Chromosome 15"/>
</dbReference>
<dbReference type="RNAct" id="Q07916">
    <property type="molecule type" value="protein"/>
</dbReference>
<dbReference type="Bgee" id="ENSMUSG00000009739">
    <property type="expression patterns" value="Expressed in retinal neural layer and 241 other cell types or tissues"/>
</dbReference>
<dbReference type="ExpressionAtlas" id="Q07916">
    <property type="expression patterns" value="baseline and differential"/>
</dbReference>
<dbReference type="GO" id="GO:0005634">
    <property type="term" value="C:nucleus"/>
    <property type="evidence" value="ECO:0000314"/>
    <property type="project" value="MGI"/>
</dbReference>
<dbReference type="GO" id="GO:0003677">
    <property type="term" value="F:DNA binding"/>
    <property type="evidence" value="ECO:0000314"/>
    <property type="project" value="MGI"/>
</dbReference>
<dbReference type="GO" id="GO:0003700">
    <property type="term" value="F:DNA-binding transcription factor activity"/>
    <property type="evidence" value="ECO:0007669"/>
    <property type="project" value="InterPro"/>
</dbReference>
<dbReference type="GO" id="GO:0043565">
    <property type="term" value="F:sequence-specific DNA binding"/>
    <property type="evidence" value="ECO:0000314"/>
    <property type="project" value="MGI"/>
</dbReference>
<dbReference type="CDD" id="cd00086">
    <property type="entry name" value="homeodomain"/>
    <property type="match status" value="1"/>
</dbReference>
<dbReference type="FunFam" id="1.10.10.60:FF:000051">
    <property type="entry name" value="POU domain protein"/>
    <property type="match status" value="1"/>
</dbReference>
<dbReference type="FunFam" id="1.10.260.40:FF:000013">
    <property type="entry name" value="POU domain protein"/>
    <property type="match status" value="1"/>
</dbReference>
<dbReference type="Gene3D" id="1.10.10.60">
    <property type="entry name" value="Homeodomain-like"/>
    <property type="match status" value="1"/>
</dbReference>
<dbReference type="Gene3D" id="1.10.260.40">
    <property type="entry name" value="lambda repressor-like DNA-binding domains"/>
    <property type="match status" value="1"/>
</dbReference>
<dbReference type="InterPro" id="IPR001356">
    <property type="entry name" value="HD"/>
</dbReference>
<dbReference type="InterPro" id="IPR009057">
    <property type="entry name" value="Homeodomain-like_sf"/>
</dbReference>
<dbReference type="InterPro" id="IPR010982">
    <property type="entry name" value="Lambda_DNA-bd_dom_sf"/>
</dbReference>
<dbReference type="InterPro" id="IPR013847">
    <property type="entry name" value="POU"/>
</dbReference>
<dbReference type="InterPro" id="IPR000327">
    <property type="entry name" value="POU_dom"/>
</dbReference>
<dbReference type="InterPro" id="IPR050255">
    <property type="entry name" value="POU_domain_TF"/>
</dbReference>
<dbReference type="PANTHER" id="PTHR11636">
    <property type="entry name" value="POU DOMAIN"/>
    <property type="match status" value="1"/>
</dbReference>
<dbReference type="PANTHER" id="PTHR11636:SF6">
    <property type="entry name" value="POU DOMAIN, CLASS 6, TRANSCRIPTION FACTOR 1"/>
    <property type="match status" value="1"/>
</dbReference>
<dbReference type="Pfam" id="PF00046">
    <property type="entry name" value="Homeodomain"/>
    <property type="match status" value="1"/>
</dbReference>
<dbReference type="Pfam" id="PF00157">
    <property type="entry name" value="Pou"/>
    <property type="match status" value="1"/>
</dbReference>
<dbReference type="PRINTS" id="PR00028">
    <property type="entry name" value="POUDOMAIN"/>
</dbReference>
<dbReference type="SMART" id="SM00389">
    <property type="entry name" value="HOX"/>
    <property type="match status" value="1"/>
</dbReference>
<dbReference type="SMART" id="SM00352">
    <property type="entry name" value="POU"/>
    <property type="match status" value="1"/>
</dbReference>
<dbReference type="SUPFAM" id="SSF46689">
    <property type="entry name" value="Homeodomain-like"/>
    <property type="match status" value="1"/>
</dbReference>
<dbReference type="SUPFAM" id="SSF47413">
    <property type="entry name" value="lambda repressor-like DNA-binding domains"/>
    <property type="match status" value="1"/>
</dbReference>
<dbReference type="PROSITE" id="PS50071">
    <property type="entry name" value="HOMEOBOX_2"/>
    <property type="match status" value="1"/>
</dbReference>
<dbReference type="PROSITE" id="PS00035">
    <property type="entry name" value="POU_1"/>
    <property type="match status" value="1"/>
</dbReference>
<dbReference type="PROSITE" id="PS00465">
    <property type="entry name" value="POU_2"/>
    <property type="match status" value="1"/>
</dbReference>
<dbReference type="PROSITE" id="PS51179">
    <property type="entry name" value="POU_3"/>
    <property type="match status" value="1"/>
</dbReference>
<reference key="1">
    <citation type="journal article" date="1993" name="J. Biol. Chem.">
        <title>A novel class of murine POU gene predominantly expressed in central nervous system.</title>
        <authorList>
            <person name="Okamoto K."/>
            <person name="Wakamiya M."/>
            <person name="Noji S."/>
            <person name="Koyama E."/>
            <person name="Taniguchi S."/>
            <person name="Takemura R."/>
            <person name="Copeland N.G."/>
            <person name="Gilbert D.J."/>
            <person name="Jenkins N.A."/>
            <person name="Muramatsu M."/>
            <person name="Hamada H."/>
        </authorList>
    </citation>
    <scope>NUCLEOTIDE SEQUENCE [MRNA] (ISOFORM C2)</scope>
    <scope>ALTERNATIVE SPLICING</scope>
    <source>
        <strain>BALB/cJ</strain>
        <tissue>Brain</tissue>
        <tissue>Testis</tissue>
    </source>
</reference>
<reference key="2">
    <citation type="journal article" date="1994" name="J. Neurosci.">
        <title>NMDA receptor activation in differentiating cerebellar cell cultures regulates the expression of a new POU gene, Cns-1.</title>
        <authorList>
            <person name="Bulleit R.F."/>
            <person name="Cui H."/>
            <person name="Wang J."/>
            <person name="Lin X."/>
        </authorList>
    </citation>
    <scope>NUCLEOTIDE SEQUENCE [MRNA] (ISOFORM C2)</scope>
    <source>
        <strain>CD-1</strain>
        <tissue>Brain</tissue>
    </source>
</reference>
<reference key="3">
    <citation type="journal article" date="2005" name="Science">
        <title>The transcriptional landscape of the mammalian genome.</title>
        <authorList>
            <person name="Carninci P."/>
            <person name="Kasukawa T."/>
            <person name="Katayama S."/>
            <person name="Gough J."/>
            <person name="Frith M.C."/>
            <person name="Maeda N."/>
            <person name="Oyama R."/>
            <person name="Ravasi T."/>
            <person name="Lenhard B."/>
            <person name="Wells C."/>
            <person name="Kodzius R."/>
            <person name="Shimokawa K."/>
            <person name="Bajic V.B."/>
            <person name="Brenner S.E."/>
            <person name="Batalov S."/>
            <person name="Forrest A.R."/>
            <person name="Zavolan M."/>
            <person name="Davis M.J."/>
            <person name="Wilming L.G."/>
            <person name="Aidinis V."/>
            <person name="Allen J.E."/>
            <person name="Ambesi-Impiombato A."/>
            <person name="Apweiler R."/>
            <person name="Aturaliya R.N."/>
            <person name="Bailey T.L."/>
            <person name="Bansal M."/>
            <person name="Baxter L."/>
            <person name="Beisel K.W."/>
            <person name="Bersano T."/>
            <person name="Bono H."/>
            <person name="Chalk A.M."/>
            <person name="Chiu K.P."/>
            <person name="Choudhary V."/>
            <person name="Christoffels A."/>
            <person name="Clutterbuck D.R."/>
            <person name="Crowe M.L."/>
            <person name="Dalla E."/>
            <person name="Dalrymple B.P."/>
            <person name="de Bono B."/>
            <person name="Della Gatta G."/>
            <person name="di Bernardo D."/>
            <person name="Down T."/>
            <person name="Engstrom P."/>
            <person name="Fagiolini M."/>
            <person name="Faulkner G."/>
            <person name="Fletcher C.F."/>
            <person name="Fukushima T."/>
            <person name="Furuno M."/>
            <person name="Futaki S."/>
            <person name="Gariboldi M."/>
            <person name="Georgii-Hemming P."/>
            <person name="Gingeras T.R."/>
            <person name="Gojobori T."/>
            <person name="Green R.E."/>
            <person name="Gustincich S."/>
            <person name="Harbers M."/>
            <person name="Hayashi Y."/>
            <person name="Hensch T.K."/>
            <person name="Hirokawa N."/>
            <person name="Hill D."/>
            <person name="Huminiecki L."/>
            <person name="Iacono M."/>
            <person name="Ikeo K."/>
            <person name="Iwama A."/>
            <person name="Ishikawa T."/>
            <person name="Jakt M."/>
            <person name="Kanapin A."/>
            <person name="Katoh M."/>
            <person name="Kawasawa Y."/>
            <person name="Kelso J."/>
            <person name="Kitamura H."/>
            <person name="Kitano H."/>
            <person name="Kollias G."/>
            <person name="Krishnan S.P."/>
            <person name="Kruger A."/>
            <person name="Kummerfeld S.K."/>
            <person name="Kurochkin I.V."/>
            <person name="Lareau L.F."/>
            <person name="Lazarevic D."/>
            <person name="Lipovich L."/>
            <person name="Liu J."/>
            <person name="Liuni S."/>
            <person name="McWilliam S."/>
            <person name="Madan Babu M."/>
            <person name="Madera M."/>
            <person name="Marchionni L."/>
            <person name="Matsuda H."/>
            <person name="Matsuzawa S."/>
            <person name="Miki H."/>
            <person name="Mignone F."/>
            <person name="Miyake S."/>
            <person name="Morris K."/>
            <person name="Mottagui-Tabar S."/>
            <person name="Mulder N."/>
            <person name="Nakano N."/>
            <person name="Nakauchi H."/>
            <person name="Ng P."/>
            <person name="Nilsson R."/>
            <person name="Nishiguchi S."/>
            <person name="Nishikawa S."/>
            <person name="Nori F."/>
            <person name="Ohara O."/>
            <person name="Okazaki Y."/>
            <person name="Orlando V."/>
            <person name="Pang K.C."/>
            <person name="Pavan W.J."/>
            <person name="Pavesi G."/>
            <person name="Pesole G."/>
            <person name="Petrovsky N."/>
            <person name="Piazza S."/>
            <person name="Reed J."/>
            <person name="Reid J.F."/>
            <person name="Ring B.Z."/>
            <person name="Ringwald M."/>
            <person name="Rost B."/>
            <person name="Ruan Y."/>
            <person name="Salzberg S.L."/>
            <person name="Sandelin A."/>
            <person name="Schneider C."/>
            <person name="Schoenbach C."/>
            <person name="Sekiguchi K."/>
            <person name="Semple C.A."/>
            <person name="Seno S."/>
            <person name="Sessa L."/>
            <person name="Sheng Y."/>
            <person name="Shibata Y."/>
            <person name="Shimada H."/>
            <person name="Shimada K."/>
            <person name="Silva D."/>
            <person name="Sinclair B."/>
            <person name="Sperling S."/>
            <person name="Stupka E."/>
            <person name="Sugiura K."/>
            <person name="Sultana R."/>
            <person name="Takenaka Y."/>
            <person name="Taki K."/>
            <person name="Tammoja K."/>
            <person name="Tan S.L."/>
            <person name="Tang S."/>
            <person name="Taylor M.S."/>
            <person name="Tegner J."/>
            <person name="Teichmann S.A."/>
            <person name="Ueda H.R."/>
            <person name="van Nimwegen E."/>
            <person name="Verardo R."/>
            <person name="Wei C.L."/>
            <person name="Yagi K."/>
            <person name="Yamanishi H."/>
            <person name="Zabarovsky E."/>
            <person name="Zhu S."/>
            <person name="Zimmer A."/>
            <person name="Hide W."/>
            <person name="Bult C."/>
            <person name="Grimmond S.M."/>
            <person name="Teasdale R.D."/>
            <person name="Liu E.T."/>
            <person name="Brusic V."/>
            <person name="Quackenbush J."/>
            <person name="Wahlestedt C."/>
            <person name="Mattick J.S."/>
            <person name="Hume D.A."/>
            <person name="Kai C."/>
            <person name="Sasaki D."/>
            <person name="Tomaru Y."/>
            <person name="Fukuda S."/>
            <person name="Kanamori-Katayama M."/>
            <person name="Suzuki M."/>
            <person name="Aoki J."/>
            <person name="Arakawa T."/>
            <person name="Iida J."/>
            <person name="Imamura K."/>
            <person name="Itoh M."/>
            <person name="Kato T."/>
            <person name="Kawaji H."/>
            <person name="Kawagashira N."/>
            <person name="Kawashima T."/>
            <person name="Kojima M."/>
            <person name="Kondo S."/>
            <person name="Konno H."/>
            <person name="Nakano K."/>
            <person name="Ninomiya N."/>
            <person name="Nishio T."/>
            <person name="Okada M."/>
            <person name="Plessy C."/>
            <person name="Shibata K."/>
            <person name="Shiraki T."/>
            <person name="Suzuki S."/>
            <person name="Tagami M."/>
            <person name="Waki K."/>
            <person name="Watahiki A."/>
            <person name="Okamura-Oho Y."/>
            <person name="Suzuki H."/>
            <person name="Kawai J."/>
            <person name="Hayashizaki Y."/>
        </authorList>
    </citation>
    <scope>NUCLEOTIDE SEQUENCE [LARGE SCALE MRNA] (ISOFORM C7)</scope>
    <source>
        <strain>C57BL/6J</strain>
        <tissue>Testis</tissue>
    </source>
</reference>
<reference key="4">
    <citation type="journal article" date="2009" name="PLoS Biol.">
        <title>Lineage-specific biology revealed by a finished genome assembly of the mouse.</title>
        <authorList>
            <person name="Church D.M."/>
            <person name="Goodstadt L."/>
            <person name="Hillier L.W."/>
            <person name="Zody M.C."/>
            <person name="Goldstein S."/>
            <person name="She X."/>
            <person name="Bult C.J."/>
            <person name="Agarwala R."/>
            <person name="Cherry J.L."/>
            <person name="DiCuccio M."/>
            <person name="Hlavina W."/>
            <person name="Kapustin Y."/>
            <person name="Meric P."/>
            <person name="Maglott D."/>
            <person name="Birtle Z."/>
            <person name="Marques A.C."/>
            <person name="Graves T."/>
            <person name="Zhou S."/>
            <person name="Teague B."/>
            <person name="Potamousis K."/>
            <person name="Churas C."/>
            <person name="Place M."/>
            <person name="Herschleb J."/>
            <person name="Runnheim R."/>
            <person name="Forrest D."/>
            <person name="Amos-Landgraf J."/>
            <person name="Schwartz D.C."/>
            <person name="Cheng Z."/>
            <person name="Lindblad-Toh K."/>
            <person name="Eichler E.E."/>
            <person name="Ponting C.P."/>
        </authorList>
    </citation>
    <scope>NUCLEOTIDE SEQUENCE [LARGE SCALE GENOMIC DNA]</scope>
    <source>
        <strain>C57BL/6J</strain>
    </source>
</reference>
<reference key="5">
    <citation type="journal article" date="2004" name="Genome Res.">
        <title>The status, quality, and expansion of the NIH full-length cDNA project: the Mammalian Gene Collection (MGC).</title>
        <authorList>
            <consortium name="The MGC Project Team"/>
        </authorList>
    </citation>
    <scope>NUCLEOTIDE SEQUENCE [LARGE SCALE MRNA] (ISOFORMS 1 AND C2)</scope>
    <source>
        <strain>C57BL/6J</strain>
        <tissue>Brain</tissue>
    </source>
</reference>
<reference key="6">
    <citation type="journal article" date="2010" name="Cell">
        <title>A tissue-specific atlas of mouse protein phosphorylation and expression.</title>
        <authorList>
            <person name="Huttlin E.L."/>
            <person name="Jedrychowski M.P."/>
            <person name="Elias J.E."/>
            <person name="Goswami T."/>
            <person name="Rad R."/>
            <person name="Beausoleil S.A."/>
            <person name="Villen J."/>
            <person name="Haas W."/>
            <person name="Sowa M.E."/>
            <person name="Gygi S.P."/>
        </authorList>
    </citation>
    <scope>IDENTIFICATION BY MASS SPECTROMETRY [LARGE SCALE ANALYSIS]</scope>
    <source>
        <tissue>Brain</tissue>
    </source>
</reference>
<name>PO6F1_MOUSE</name>
<keyword id="KW-0025">Alternative splicing</keyword>
<keyword id="KW-0238">DNA-binding</keyword>
<keyword id="KW-0371">Homeobox</keyword>
<keyword id="KW-0539">Nucleus</keyword>
<keyword id="KW-1185">Reference proteome</keyword>
<keyword id="KW-0804">Transcription</keyword>
<keyword id="KW-0805">Transcription regulation</keyword>
<sequence length="576" mass="59844">MDPGAGSDSSLTVNEQVIVMSGHETIRVLEVGVDAQLPAEEESKGLESVAAGGSQSGGPVEASGPAEAGSCDPDHSAEATVAARSPSESCPSDCHLQPSPEPASGITDPDAAGCTSCPPGQVAGQQGLAVWTIPTATVAALPGLTAASPTGGTFKPPLAGLQAAAVLNTALPTPVQAAPPIQASSPAQPRPPAQPQPLFQTQPLLQTTPAILPQPTAATVAAPTPKTVDATPQITVQPAGFAFSPGIISAASLGGQTQILGSLTTAPVITNTIPSMPGISSQILTNAQGQVIGALPWVVNSASVATPAPAQSLQVQAVTPQLLLNAQGQVIATLASSPLPQPVAVRKPNTPESPAKSEVQPIQPTQAVPQPAVILTSPTPALKPSAATPIPITCSETPTVSQLVSKPHTPSLDEDGINLEEIREFAKNFKIRRLSLGLTQTQVGQALTATEGPAYSQSAICRFEKLDITPKSAQKLKPVLEKWLMEAELRNQEGQQNLMEFVGGEPSKKRKRRTSFTPQAIEALNAYFEKNPLPTGQEITEIAKELNYDREVVRVWFCNRRQTLKNTSKLNVFQIP</sequence>
<protein>
    <recommendedName>
        <fullName>POU domain, class 6, transcription factor 1</fullName>
    </recommendedName>
    <alternativeName>
        <fullName>Octamer-binding transcription factor EMB</fullName>
    </alternativeName>
    <alternativeName>
        <fullName>Transcription regulatory protein MCP-1</fullName>
    </alternativeName>
</protein>
<evidence type="ECO:0000250" key="1"/>
<evidence type="ECO:0000255" key="2">
    <source>
        <dbReference type="PROSITE-ProRule" id="PRU00108"/>
    </source>
</evidence>
<evidence type="ECO:0000255" key="3">
    <source>
        <dbReference type="PROSITE-ProRule" id="PRU00530"/>
    </source>
</evidence>
<evidence type="ECO:0000256" key="4">
    <source>
        <dbReference type="SAM" id="MobiDB-lite"/>
    </source>
</evidence>
<evidence type="ECO:0000305" key="5"/>
<accession>Q07916</accession>
<accession>Q5U4D4</accession>
<accession>Q91XK3</accession>
<gene>
    <name type="primary">Pou6f1</name>
    <name type="synonym">Emb</name>
</gene>
<proteinExistence type="evidence at protein level"/>
<comment type="function">
    <text evidence="1">Transcription factor that binds preferentially to a variant of the octamer motif (5'-ATGATAAT-3').</text>
</comment>
<comment type="subcellular location">
    <subcellularLocation>
        <location evidence="2 3">Nucleus</location>
    </subcellularLocation>
</comment>
<comment type="alternative products">
    <event type="alternative splicing"/>
    <isoform>
        <id>Q07916-4</id>
        <name>1</name>
        <sequence type="displayed"/>
    </isoform>
    <isoform>
        <id>Q07916-1</id>
        <name>C2</name>
        <sequence type="described" ref="VSP_062588"/>
    </isoform>
    <isoform>
        <id>Q07916-2</id>
        <name>C1</name>
        <sequence type="described" ref="VSP_062588 VSP_062589"/>
    </isoform>
    <isoform>
        <id>Q07916-3</id>
        <name>C7</name>
        <sequence type="described" ref="VSP_062587"/>
    </isoform>
</comment>
<comment type="tissue specificity">
    <text>Isoform C1 and isoform C2 are found in the brain, while isoform C7 is found in the testis.</text>
</comment>
<comment type="developmental stage">
    <text>Expressed in the embryo throughout post-implantation stages with the most prominent expression in the developing CNS. In the adult, it is highly expressed in brain whereas weaker expression can be detected in other organs.</text>
</comment>
<comment type="similarity">
    <text evidence="5">Belongs to the POU transcription factor family. Class-6 subfamily.</text>
</comment>
<organism>
    <name type="scientific">Mus musculus</name>
    <name type="common">Mouse</name>
    <dbReference type="NCBI Taxonomy" id="10090"/>
    <lineage>
        <taxon>Eukaryota</taxon>
        <taxon>Metazoa</taxon>
        <taxon>Chordata</taxon>
        <taxon>Craniata</taxon>
        <taxon>Vertebrata</taxon>
        <taxon>Euteleostomi</taxon>
        <taxon>Mammalia</taxon>
        <taxon>Eutheria</taxon>
        <taxon>Euarchontoglires</taxon>
        <taxon>Glires</taxon>
        <taxon>Rodentia</taxon>
        <taxon>Myomorpha</taxon>
        <taxon>Muroidea</taxon>
        <taxon>Muridae</taxon>
        <taxon>Murinae</taxon>
        <taxon>Mus</taxon>
        <taxon>Mus</taxon>
    </lineage>
</organism>
<feature type="chain" id="PRO_0000100760" description="POU domain, class 6, transcription factor 1">
    <location>
        <begin position="1"/>
        <end position="576"/>
    </location>
</feature>
<feature type="domain" description="POU-specific" evidence="3">
    <location>
        <begin position="414"/>
        <end position="488"/>
    </location>
</feature>
<feature type="DNA-binding region" description="Homeobox" evidence="2">
    <location>
        <begin position="509"/>
        <end position="568"/>
    </location>
</feature>
<feature type="region of interest" description="Disordered" evidence="4">
    <location>
        <begin position="65"/>
        <end position="88"/>
    </location>
</feature>
<feature type="splice variant" id="VSP_062587" description="In isoform C7.">
    <original>MDPGAGSDSSLTVNEQVIVMSGHETIRVLEVGVDAQLPAEEESKGLESVAAGGSQSGGPVEASGPAEAGSCDPDHSAEATVAARSPSESCPSDCHLQPSPEPASGITDPDAAGCTSCPPGQVAGQQGLAVWTIPTATVAALPGLTAASPTGGTFKPPLAGLQAAAVLNTALPTPVQAAPPIQASSPAQPRPPAQPQPLFQTQPLLQTTPAILPQPTAATVAAPTPKTVDATPQITVQPAGFAFSPGIISAASLGGQTQILGSLTTAPVITNTIPSMPGISSQILTNAQGQVIGALPWVVNSASVATPAPAQSLQVQAVTPQLLLNAQGQVIATLASSPLPQPVAVRKPNTPESPAKSEVQPIQPTQAVPQPAVILTSPTPALKPSAATPIPITCSETPTVSQLVSK</original>
    <variation>MCQHTLIFMHVSLVPPSGLE</variation>
    <location>
        <begin position="1"/>
        <end position="406"/>
    </location>
</feature>
<feature type="splice variant" id="VSP_062588" description="In isoform C2 and isoform C1.">
    <location>
        <begin position="1"/>
        <end position="275"/>
    </location>
</feature>
<feature type="splice variant" id="VSP_062589" description="In isoform C1.">
    <original>K</original>
    <variation>SLE</variation>
    <location>
        <position position="406"/>
    </location>
</feature>